<feature type="chain" id="PRO_0000333974" description="Cell division protein SepF">
    <location>
        <begin position="1"/>
        <end position="152"/>
    </location>
</feature>
<feature type="region of interest" description="Disordered" evidence="2">
    <location>
        <begin position="21"/>
        <end position="56"/>
    </location>
</feature>
<feature type="compositionally biased region" description="Basic and acidic residues" evidence="2">
    <location>
        <begin position="26"/>
        <end position="40"/>
    </location>
</feature>
<keyword id="KW-0131">Cell cycle</keyword>
<keyword id="KW-0132">Cell division</keyword>
<keyword id="KW-0963">Cytoplasm</keyword>
<keyword id="KW-0717">Septation</keyword>
<reference key="1">
    <citation type="journal article" date="2007" name="Nat. Biotechnol.">
        <title>Comparative analysis of the complete genome sequence of the plant growth-promoting bacterium Bacillus amyloliquefaciens FZB42.</title>
        <authorList>
            <person name="Chen X.H."/>
            <person name="Koumoutsi A."/>
            <person name="Scholz R."/>
            <person name="Eisenreich A."/>
            <person name="Schneider K."/>
            <person name="Heinemeyer I."/>
            <person name="Morgenstern B."/>
            <person name="Voss B."/>
            <person name="Hess W.R."/>
            <person name="Reva O."/>
            <person name="Junge H."/>
            <person name="Voigt B."/>
            <person name="Jungblut P.R."/>
            <person name="Vater J."/>
            <person name="Suessmuth R."/>
            <person name="Liesegang H."/>
            <person name="Strittmatter A."/>
            <person name="Gottschalk G."/>
            <person name="Borriss R."/>
        </authorList>
    </citation>
    <scope>NUCLEOTIDE SEQUENCE [LARGE SCALE GENOMIC DNA]</scope>
    <source>
        <strain>DSM 23117 / BGSC 10A6 / LMG 26770 / FZB42</strain>
    </source>
</reference>
<gene>
    <name evidence="1" type="primary">sepF</name>
    <name type="ordered locus">RBAM_015220</name>
</gene>
<protein>
    <recommendedName>
        <fullName evidence="1">Cell division protein SepF</fullName>
    </recommendedName>
</protein>
<organism>
    <name type="scientific">Bacillus velezensis (strain DSM 23117 / BGSC 10A6 / LMG 26770 / FZB42)</name>
    <name type="common">Bacillus amyloliquefaciens subsp. plantarum</name>
    <dbReference type="NCBI Taxonomy" id="326423"/>
    <lineage>
        <taxon>Bacteria</taxon>
        <taxon>Bacillati</taxon>
        <taxon>Bacillota</taxon>
        <taxon>Bacilli</taxon>
        <taxon>Bacillales</taxon>
        <taxon>Bacillaceae</taxon>
        <taxon>Bacillus</taxon>
        <taxon>Bacillus amyloliquefaciens group</taxon>
    </lineage>
</organism>
<comment type="function">
    <text evidence="1">Cell division protein that is part of the divisome complex and is recruited early to the Z-ring. Probably stimulates Z-ring formation, perhaps through the cross-linking of FtsZ protofilaments. Its function overlaps with FtsA.</text>
</comment>
<comment type="subunit">
    <text evidence="1">Homodimer. Interacts with FtsZ.</text>
</comment>
<comment type="subcellular location">
    <subcellularLocation>
        <location evidence="1">Cytoplasm</location>
    </subcellularLocation>
    <text evidence="1">Localizes to the division site, in a FtsZ-dependent manner.</text>
</comment>
<comment type="similarity">
    <text evidence="1">Belongs to the SepF family.</text>
</comment>
<accession>A7Z4F9</accession>
<sequence length="152" mass="17595">MSMKNKLKNFFSMDEEEYEYEYIETEQDHPEEHEQQKDKQPAYAQKPQGKQNVVSLQSVQKSSKVVLSEPRVYAEAQEIADHLKNRRAVVVNLQRIQHDQAKRIVDFLSGTVYAIGGDIQRIGSDIFLCTPDNVDVSGTISELINEDEHQRW</sequence>
<dbReference type="EMBL" id="CP000560">
    <property type="protein sequence ID" value="ABS73885.1"/>
    <property type="molecule type" value="Genomic_DNA"/>
</dbReference>
<dbReference type="RefSeq" id="WP_007409719.1">
    <property type="nucleotide sequence ID" value="NC_009725.2"/>
</dbReference>
<dbReference type="SMR" id="A7Z4F9"/>
<dbReference type="GeneID" id="93080655"/>
<dbReference type="KEGG" id="bay:RBAM_015220"/>
<dbReference type="HOGENOM" id="CLU_078499_4_1_9"/>
<dbReference type="Proteomes" id="UP000001120">
    <property type="component" value="Chromosome"/>
</dbReference>
<dbReference type="GO" id="GO:0005737">
    <property type="term" value="C:cytoplasm"/>
    <property type="evidence" value="ECO:0007669"/>
    <property type="project" value="UniProtKB-SubCell"/>
</dbReference>
<dbReference type="GO" id="GO:0000917">
    <property type="term" value="P:division septum assembly"/>
    <property type="evidence" value="ECO:0007669"/>
    <property type="project" value="UniProtKB-KW"/>
</dbReference>
<dbReference type="GO" id="GO:0043093">
    <property type="term" value="P:FtsZ-dependent cytokinesis"/>
    <property type="evidence" value="ECO:0007669"/>
    <property type="project" value="UniProtKB-UniRule"/>
</dbReference>
<dbReference type="FunFam" id="3.30.110.150:FF:000002">
    <property type="entry name" value="Cell division protein SepF"/>
    <property type="match status" value="1"/>
</dbReference>
<dbReference type="Gene3D" id="3.30.110.150">
    <property type="entry name" value="SepF-like protein"/>
    <property type="match status" value="1"/>
</dbReference>
<dbReference type="HAMAP" id="MF_01197">
    <property type="entry name" value="SepF"/>
    <property type="match status" value="1"/>
</dbReference>
<dbReference type="InterPro" id="IPR023052">
    <property type="entry name" value="Cell_div_SepF"/>
</dbReference>
<dbReference type="InterPro" id="IPR007561">
    <property type="entry name" value="Cell_div_SepF/SepF-rel"/>
</dbReference>
<dbReference type="InterPro" id="IPR038594">
    <property type="entry name" value="SepF-like_sf"/>
</dbReference>
<dbReference type="PANTHER" id="PTHR35798">
    <property type="entry name" value="CELL DIVISION PROTEIN SEPF"/>
    <property type="match status" value="1"/>
</dbReference>
<dbReference type="PANTHER" id="PTHR35798:SF1">
    <property type="entry name" value="CELL DIVISION PROTEIN SEPF"/>
    <property type="match status" value="1"/>
</dbReference>
<dbReference type="Pfam" id="PF04472">
    <property type="entry name" value="SepF"/>
    <property type="match status" value="1"/>
</dbReference>
<proteinExistence type="inferred from homology"/>
<name>SEPF_BACVZ</name>
<evidence type="ECO:0000255" key="1">
    <source>
        <dbReference type="HAMAP-Rule" id="MF_01197"/>
    </source>
</evidence>
<evidence type="ECO:0000256" key="2">
    <source>
        <dbReference type="SAM" id="MobiDB-lite"/>
    </source>
</evidence>